<comment type="function">
    <text evidence="1">Component of the acetyl coenzyme A carboxylase (ACC) complex. First, biotin carboxylase catalyzes the carboxylation of biotin on its carrier protein (BCCP) and then the CO(2) group is transferred by the carboxyltransferase to acetyl-CoA to form malonyl-CoA.</text>
</comment>
<comment type="catalytic activity">
    <reaction evidence="1">
        <text>N(6)-carboxybiotinyl-L-lysyl-[protein] + acetyl-CoA = N(6)-biotinyl-L-lysyl-[protein] + malonyl-CoA</text>
        <dbReference type="Rhea" id="RHEA:54728"/>
        <dbReference type="Rhea" id="RHEA-COMP:10505"/>
        <dbReference type="Rhea" id="RHEA-COMP:10506"/>
        <dbReference type="ChEBI" id="CHEBI:57288"/>
        <dbReference type="ChEBI" id="CHEBI:57384"/>
        <dbReference type="ChEBI" id="CHEBI:83144"/>
        <dbReference type="ChEBI" id="CHEBI:83145"/>
        <dbReference type="EC" id="2.1.3.15"/>
    </reaction>
</comment>
<comment type="pathway">
    <text evidence="1">Lipid metabolism; malonyl-CoA biosynthesis; malonyl-CoA from acetyl-CoA: step 1/1.</text>
</comment>
<comment type="subunit">
    <text evidence="1">Acetyl-CoA carboxylase is a heterohexamer composed of biotin carboxyl carrier protein (AccB), biotin carboxylase (AccC) and two subunits each of ACCase subunit alpha (AccA) and ACCase subunit beta (AccD).</text>
</comment>
<comment type="subcellular location">
    <subcellularLocation>
        <location evidence="1">Cytoplasm</location>
    </subcellularLocation>
</comment>
<comment type="similarity">
    <text evidence="1">Belongs to the AccA family.</text>
</comment>
<name>ACCA_STAES</name>
<proteinExistence type="inferred from homology"/>
<gene>
    <name evidence="1" type="primary">accA</name>
    <name type="ordered locus">SE_1375</name>
</gene>
<reference key="1">
    <citation type="journal article" date="2003" name="Mol. Microbiol.">
        <title>Genome-based analysis of virulence genes in a non-biofilm-forming Staphylococcus epidermidis strain (ATCC 12228).</title>
        <authorList>
            <person name="Zhang Y.-Q."/>
            <person name="Ren S.-X."/>
            <person name="Li H.-L."/>
            <person name="Wang Y.-X."/>
            <person name="Fu G."/>
            <person name="Yang J."/>
            <person name="Qin Z.-Q."/>
            <person name="Miao Y.-G."/>
            <person name="Wang W.-Y."/>
            <person name="Chen R.-S."/>
            <person name="Shen Y."/>
            <person name="Chen Z."/>
            <person name="Yuan Z.-H."/>
            <person name="Zhao G.-P."/>
            <person name="Qu D."/>
            <person name="Danchin A."/>
            <person name="Wen Y.-M."/>
        </authorList>
    </citation>
    <scope>NUCLEOTIDE SEQUENCE [LARGE SCALE GENOMIC DNA]</scope>
    <source>
        <strain>ATCC 12228 / FDA PCI 1200</strain>
    </source>
</reference>
<protein>
    <recommendedName>
        <fullName evidence="1">Acetyl-coenzyme A carboxylase carboxyl transferase subunit alpha</fullName>
        <shortName evidence="1">ACCase subunit alpha</shortName>
        <shortName evidence="1">Acetyl-CoA carboxylase carboxyltransferase subunit alpha</shortName>
        <ecNumber evidence="1">2.1.3.15</ecNumber>
    </recommendedName>
</protein>
<organism>
    <name type="scientific">Staphylococcus epidermidis (strain ATCC 12228 / FDA PCI 1200)</name>
    <dbReference type="NCBI Taxonomy" id="176280"/>
    <lineage>
        <taxon>Bacteria</taxon>
        <taxon>Bacillati</taxon>
        <taxon>Bacillota</taxon>
        <taxon>Bacilli</taxon>
        <taxon>Bacillales</taxon>
        <taxon>Staphylococcaceae</taxon>
        <taxon>Staphylococcus</taxon>
    </lineage>
</organism>
<dbReference type="EC" id="2.1.3.15" evidence="1"/>
<dbReference type="EMBL" id="AE015929">
    <property type="protein sequence ID" value="AAO04974.1"/>
    <property type="molecule type" value="Genomic_DNA"/>
</dbReference>
<dbReference type="RefSeq" id="NP_764930.1">
    <property type="nucleotide sequence ID" value="NC_004461.1"/>
</dbReference>
<dbReference type="RefSeq" id="WP_001832707.1">
    <property type="nucleotide sequence ID" value="NZ_WBME01000042.1"/>
</dbReference>
<dbReference type="SMR" id="Q8CS67"/>
<dbReference type="KEGG" id="sep:SE_1375"/>
<dbReference type="PATRIC" id="fig|176280.10.peg.1343"/>
<dbReference type="eggNOG" id="COG0825">
    <property type="taxonomic scope" value="Bacteria"/>
</dbReference>
<dbReference type="HOGENOM" id="CLU_015486_0_2_9"/>
<dbReference type="OrthoDB" id="9808023at2"/>
<dbReference type="UniPathway" id="UPA00655">
    <property type="reaction ID" value="UER00711"/>
</dbReference>
<dbReference type="Proteomes" id="UP000001411">
    <property type="component" value="Chromosome"/>
</dbReference>
<dbReference type="GO" id="GO:0009317">
    <property type="term" value="C:acetyl-CoA carboxylase complex"/>
    <property type="evidence" value="ECO:0007669"/>
    <property type="project" value="InterPro"/>
</dbReference>
<dbReference type="GO" id="GO:0003989">
    <property type="term" value="F:acetyl-CoA carboxylase activity"/>
    <property type="evidence" value="ECO:0007669"/>
    <property type="project" value="InterPro"/>
</dbReference>
<dbReference type="GO" id="GO:0005524">
    <property type="term" value="F:ATP binding"/>
    <property type="evidence" value="ECO:0007669"/>
    <property type="project" value="UniProtKB-KW"/>
</dbReference>
<dbReference type="GO" id="GO:0016743">
    <property type="term" value="F:carboxyl- or carbamoyltransferase activity"/>
    <property type="evidence" value="ECO:0007669"/>
    <property type="project" value="UniProtKB-UniRule"/>
</dbReference>
<dbReference type="GO" id="GO:0006633">
    <property type="term" value="P:fatty acid biosynthetic process"/>
    <property type="evidence" value="ECO:0007669"/>
    <property type="project" value="UniProtKB-KW"/>
</dbReference>
<dbReference type="GO" id="GO:2001295">
    <property type="term" value="P:malonyl-CoA biosynthetic process"/>
    <property type="evidence" value="ECO:0007669"/>
    <property type="project" value="UniProtKB-UniRule"/>
</dbReference>
<dbReference type="Gene3D" id="3.90.226.10">
    <property type="entry name" value="2-enoyl-CoA Hydratase, Chain A, domain 1"/>
    <property type="match status" value="1"/>
</dbReference>
<dbReference type="HAMAP" id="MF_00823">
    <property type="entry name" value="AcetylCoA_CT_alpha"/>
    <property type="match status" value="1"/>
</dbReference>
<dbReference type="InterPro" id="IPR001095">
    <property type="entry name" value="Acetyl_CoA_COase_a_su"/>
</dbReference>
<dbReference type="InterPro" id="IPR029045">
    <property type="entry name" value="ClpP/crotonase-like_dom_sf"/>
</dbReference>
<dbReference type="InterPro" id="IPR011763">
    <property type="entry name" value="COA_CT_C"/>
</dbReference>
<dbReference type="NCBIfam" id="TIGR00513">
    <property type="entry name" value="accA"/>
    <property type="match status" value="1"/>
</dbReference>
<dbReference type="NCBIfam" id="NF041504">
    <property type="entry name" value="AccA_sub"/>
    <property type="match status" value="1"/>
</dbReference>
<dbReference type="NCBIfam" id="NF004344">
    <property type="entry name" value="PRK05724.1"/>
    <property type="match status" value="1"/>
</dbReference>
<dbReference type="PANTHER" id="PTHR42853">
    <property type="entry name" value="ACETYL-COENZYME A CARBOXYLASE CARBOXYL TRANSFERASE SUBUNIT ALPHA"/>
    <property type="match status" value="1"/>
</dbReference>
<dbReference type="PANTHER" id="PTHR42853:SF3">
    <property type="entry name" value="ACETYL-COENZYME A CARBOXYLASE CARBOXYL TRANSFERASE SUBUNIT ALPHA, CHLOROPLASTIC"/>
    <property type="match status" value="1"/>
</dbReference>
<dbReference type="Pfam" id="PF03255">
    <property type="entry name" value="ACCA"/>
    <property type="match status" value="1"/>
</dbReference>
<dbReference type="PRINTS" id="PR01069">
    <property type="entry name" value="ACCCTRFRASEA"/>
</dbReference>
<dbReference type="SUPFAM" id="SSF52096">
    <property type="entry name" value="ClpP/crotonase"/>
    <property type="match status" value="1"/>
</dbReference>
<dbReference type="PROSITE" id="PS50989">
    <property type="entry name" value="COA_CT_CTER"/>
    <property type="match status" value="1"/>
</dbReference>
<keyword id="KW-0067">ATP-binding</keyword>
<keyword id="KW-0963">Cytoplasm</keyword>
<keyword id="KW-0275">Fatty acid biosynthesis</keyword>
<keyword id="KW-0276">Fatty acid metabolism</keyword>
<keyword id="KW-0444">Lipid biosynthesis</keyword>
<keyword id="KW-0443">Lipid metabolism</keyword>
<keyword id="KW-0547">Nucleotide-binding</keyword>
<keyword id="KW-0808">Transferase</keyword>
<accession>Q8CS67</accession>
<sequence>MLDFEKPLFEIRNKIDSLKESQEKNEVDLQDEIDMLEASLKRETTKVYTNLKPWDRVQIARLPERPTTLDYIPYIFDSFIELHGDRSFRDDPAMIGGIGYLDGKSVTVIGQQRGKDTKDNIYRNFGMAHPEGYRKALRLMKQAEKFNRPIFTFIDTKGAYPGKAAEERGQSESIAKNLMEMASLTVPVIAVVIGEGGSGGALGIGISNRVLMLENSTYSVISPEGAAALLWKDSNLAQIAAETMKITALDLLDLGIIDEVINEPLGGAQKDEEVQALSIKKMFLKHLNELKQLTPEELANDRFEKFRKIGSVVE</sequence>
<feature type="chain" id="PRO_0000223832" description="Acetyl-coenzyme A carboxylase carboxyl transferase subunit alpha">
    <location>
        <begin position="1"/>
        <end position="314"/>
    </location>
</feature>
<feature type="domain" description="CoA carboxyltransferase C-terminal" evidence="2">
    <location>
        <begin position="32"/>
        <end position="289"/>
    </location>
</feature>
<evidence type="ECO:0000255" key="1">
    <source>
        <dbReference type="HAMAP-Rule" id="MF_00823"/>
    </source>
</evidence>
<evidence type="ECO:0000255" key="2">
    <source>
        <dbReference type="PROSITE-ProRule" id="PRU01137"/>
    </source>
</evidence>